<sequence length="269" mass="28611">MVRIAIAGAAGRMGRNLVKASHINPDASVTAGSERPESSLVGVDIGELCGEGKFDVFLTDDLEKEVDNFDVVIDFTVPVSTLANLELCKQHGKSIVIGTTGFSEEERALIDAVAKHVPVVMAPNYSVGVNLVFKLLEKAAKVMGDYCDVEIVEAHHRHKVDAPSGTAIGMGEAIAGAMGNKLSDVAVYAREGITGERTKDEIGFATIRAGDIVGEHTAMFADIGERVEITHKATDRMTFANGAVKAAVWLHSKPAGFYTMTDVLGLNEL</sequence>
<organism>
    <name type="scientific">Vibrio parahaemolyticus serotype O3:K6 (strain RIMD 2210633)</name>
    <dbReference type="NCBI Taxonomy" id="223926"/>
    <lineage>
        <taxon>Bacteria</taxon>
        <taxon>Pseudomonadati</taxon>
        <taxon>Pseudomonadota</taxon>
        <taxon>Gammaproteobacteria</taxon>
        <taxon>Vibrionales</taxon>
        <taxon>Vibrionaceae</taxon>
        <taxon>Vibrio</taxon>
    </lineage>
</organism>
<dbReference type="EC" id="1.17.1.8" evidence="1"/>
<dbReference type="EMBL" id="BA000031">
    <property type="protein sequence ID" value="BAC58732.1"/>
    <property type="molecule type" value="Genomic_DNA"/>
</dbReference>
<dbReference type="RefSeq" id="NP_796848.1">
    <property type="nucleotide sequence ID" value="NC_004603.1"/>
</dbReference>
<dbReference type="RefSeq" id="WP_005461189.1">
    <property type="nucleotide sequence ID" value="NC_004603.1"/>
</dbReference>
<dbReference type="SMR" id="Q87SF5"/>
<dbReference type="GeneID" id="1187937"/>
<dbReference type="KEGG" id="vpa:VP0469"/>
<dbReference type="PATRIC" id="fig|223926.6.peg.447"/>
<dbReference type="eggNOG" id="COG0289">
    <property type="taxonomic scope" value="Bacteria"/>
</dbReference>
<dbReference type="HOGENOM" id="CLU_047479_2_1_6"/>
<dbReference type="UniPathway" id="UPA00034">
    <property type="reaction ID" value="UER00018"/>
</dbReference>
<dbReference type="Proteomes" id="UP000002493">
    <property type="component" value="Chromosome 1"/>
</dbReference>
<dbReference type="GO" id="GO:0005829">
    <property type="term" value="C:cytosol"/>
    <property type="evidence" value="ECO:0007669"/>
    <property type="project" value="TreeGrafter"/>
</dbReference>
<dbReference type="GO" id="GO:0008839">
    <property type="term" value="F:4-hydroxy-tetrahydrodipicolinate reductase"/>
    <property type="evidence" value="ECO:0007669"/>
    <property type="project" value="UniProtKB-EC"/>
</dbReference>
<dbReference type="GO" id="GO:0051287">
    <property type="term" value="F:NAD binding"/>
    <property type="evidence" value="ECO:0007669"/>
    <property type="project" value="UniProtKB-UniRule"/>
</dbReference>
<dbReference type="GO" id="GO:0050661">
    <property type="term" value="F:NADP binding"/>
    <property type="evidence" value="ECO:0007669"/>
    <property type="project" value="UniProtKB-UniRule"/>
</dbReference>
<dbReference type="GO" id="GO:0016726">
    <property type="term" value="F:oxidoreductase activity, acting on CH or CH2 groups, NAD or NADP as acceptor"/>
    <property type="evidence" value="ECO:0007669"/>
    <property type="project" value="UniProtKB-UniRule"/>
</dbReference>
<dbReference type="GO" id="GO:0019877">
    <property type="term" value="P:diaminopimelate biosynthetic process"/>
    <property type="evidence" value="ECO:0007669"/>
    <property type="project" value="UniProtKB-UniRule"/>
</dbReference>
<dbReference type="GO" id="GO:0009089">
    <property type="term" value="P:lysine biosynthetic process via diaminopimelate"/>
    <property type="evidence" value="ECO:0007669"/>
    <property type="project" value="UniProtKB-UniRule"/>
</dbReference>
<dbReference type="CDD" id="cd02274">
    <property type="entry name" value="DHDPR_N"/>
    <property type="match status" value="1"/>
</dbReference>
<dbReference type="FunFam" id="3.30.360.10:FF:000004">
    <property type="entry name" value="4-hydroxy-tetrahydrodipicolinate reductase"/>
    <property type="match status" value="1"/>
</dbReference>
<dbReference type="FunFam" id="3.40.50.720:FF:000048">
    <property type="entry name" value="4-hydroxy-tetrahydrodipicolinate reductase"/>
    <property type="match status" value="1"/>
</dbReference>
<dbReference type="Gene3D" id="3.30.360.10">
    <property type="entry name" value="Dihydrodipicolinate Reductase, domain 2"/>
    <property type="match status" value="1"/>
</dbReference>
<dbReference type="Gene3D" id="3.40.50.720">
    <property type="entry name" value="NAD(P)-binding Rossmann-like Domain"/>
    <property type="match status" value="1"/>
</dbReference>
<dbReference type="HAMAP" id="MF_00102">
    <property type="entry name" value="DapB"/>
    <property type="match status" value="1"/>
</dbReference>
<dbReference type="InterPro" id="IPR022663">
    <property type="entry name" value="DapB_C"/>
</dbReference>
<dbReference type="InterPro" id="IPR000846">
    <property type="entry name" value="DapB_N"/>
</dbReference>
<dbReference type="InterPro" id="IPR022664">
    <property type="entry name" value="DapB_N_CS"/>
</dbReference>
<dbReference type="InterPro" id="IPR023940">
    <property type="entry name" value="DHDPR_bac"/>
</dbReference>
<dbReference type="InterPro" id="IPR036291">
    <property type="entry name" value="NAD(P)-bd_dom_sf"/>
</dbReference>
<dbReference type="NCBIfam" id="TIGR00036">
    <property type="entry name" value="dapB"/>
    <property type="match status" value="1"/>
</dbReference>
<dbReference type="PANTHER" id="PTHR20836:SF0">
    <property type="entry name" value="4-HYDROXY-TETRAHYDRODIPICOLINATE REDUCTASE 1, CHLOROPLASTIC-RELATED"/>
    <property type="match status" value="1"/>
</dbReference>
<dbReference type="PANTHER" id="PTHR20836">
    <property type="entry name" value="DIHYDRODIPICOLINATE REDUCTASE"/>
    <property type="match status" value="1"/>
</dbReference>
<dbReference type="Pfam" id="PF05173">
    <property type="entry name" value="DapB_C"/>
    <property type="match status" value="1"/>
</dbReference>
<dbReference type="Pfam" id="PF01113">
    <property type="entry name" value="DapB_N"/>
    <property type="match status" value="1"/>
</dbReference>
<dbReference type="PIRSF" id="PIRSF000161">
    <property type="entry name" value="DHPR"/>
    <property type="match status" value="1"/>
</dbReference>
<dbReference type="SUPFAM" id="SSF55347">
    <property type="entry name" value="Glyceraldehyde-3-phosphate dehydrogenase-like, C-terminal domain"/>
    <property type="match status" value="1"/>
</dbReference>
<dbReference type="SUPFAM" id="SSF51735">
    <property type="entry name" value="NAD(P)-binding Rossmann-fold domains"/>
    <property type="match status" value="1"/>
</dbReference>
<dbReference type="PROSITE" id="PS01298">
    <property type="entry name" value="DAPB"/>
    <property type="match status" value="1"/>
</dbReference>
<comment type="function">
    <text evidence="1">Catalyzes the conversion of 4-hydroxy-tetrahydrodipicolinate (HTPA) to tetrahydrodipicolinate.</text>
</comment>
<comment type="catalytic activity">
    <reaction evidence="1">
        <text>(S)-2,3,4,5-tetrahydrodipicolinate + NAD(+) + H2O = (2S,4S)-4-hydroxy-2,3,4,5-tetrahydrodipicolinate + NADH + H(+)</text>
        <dbReference type="Rhea" id="RHEA:35323"/>
        <dbReference type="ChEBI" id="CHEBI:15377"/>
        <dbReference type="ChEBI" id="CHEBI:15378"/>
        <dbReference type="ChEBI" id="CHEBI:16845"/>
        <dbReference type="ChEBI" id="CHEBI:57540"/>
        <dbReference type="ChEBI" id="CHEBI:57945"/>
        <dbReference type="ChEBI" id="CHEBI:67139"/>
        <dbReference type="EC" id="1.17.1.8"/>
    </reaction>
</comment>
<comment type="catalytic activity">
    <reaction evidence="1">
        <text>(S)-2,3,4,5-tetrahydrodipicolinate + NADP(+) + H2O = (2S,4S)-4-hydroxy-2,3,4,5-tetrahydrodipicolinate + NADPH + H(+)</text>
        <dbReference type="Rhea" id="RHEA:35331"/>
        <dbReference type="ChEBI" id="CHEBI:15377"/>
        <dbReference type="ChEBI" id="CHEBI:15378"/>
        <dbReference type="ChEBI" id="CHEBI:16845"/>
        <dbReference type="ChEBI" id="CHEBI:57783"/>
        <dbReference type="ChEBI" id="CHEBI:58349"/>
        <dbReference type="ChEBI" id="CHEBI:67139"/>
        <dbReference type="EC" id="1.17.1.8"/>
    </reaction>
</comment>
<comment type="pathway">
    <text evidence="1">Amino-acid biosynthesis; L-lysine biosynthesis via DAP pathway; (S)-tetrahydrodipicolinate from L-aspartate: step 4/4.</text>
</comment>
<comment type="subcellular location">
    <subcellularLocation>
        <location evidence="1">Cytoplasm</location>
    </subcellularLocation>
</comment>
<comment type="similarity">
    <text evidence="1">Belongs to the DapB family.</text>
</comment>
<comment type="caution">
    <text evidence="2">Was originally thought to be a dihydrodipicolinate reductase (DHDPR), catalyzing the conversion of dihydrodipicolinate to tetrahydrodipicolinate. However, it was shown in E.coli that the substrate of the enzymatic reaction is not dihydrodipicolinate (DHDP) but in fact (2S,4S)-4-hydroxy-2,3,4,5-tetrahydrodipicolinic acid (HTPA), the product released by the DapA-catalyzed reaction.</text>
</comment>
<feature type="chain" id="PRO_0000141505" description="4-hydroxy-tetrahydrodipicolinate reductase">
    <location>
        <begin position="1"/>
        <end position="269"/>
    </location>
</feature>
<feature type="active site" description="Proton donor/acceptor" evidence="1">
    <location>
        <position position="155"/>
    </location>
</feature>
<feature type="active site" description="Proton donor" evidence="1">
    <location>
        <position position="159"/>
    </location>
</feature>
<feature type="binding site" evidence="1">
    <location>
        <begin position="8"/>
        <end position="13"/>
    </location>
    <ligand>
        <name>NAD(+)</name>
        <dbReference type="ChEBI" id="CHEBI:57540"/>
    </ligand>
</feature>
<feature type="binding site" evidence="1">
    <location>
        <position position="34"/>
    </location>
    <ligand>
        <name>NAD(+)</name>
        <dbReference type="ChEBI" id="CHEBI:57540"/>
    </ligand>
</feature>
<feature type="binding site" evidence="1">
    <location>
        <position position="35"/>
    </location>
    <ligand>
        <name>NADP(+)</name>
        <dbReference type="ChEBI" id="CHEBI:58349"/>
    </ligand>
</feature>
<feature type="binding site" evidence="1">
    <location>
        <begin position="98"/>
        <end position="100"/>
    </location>
    <ligand>
        <name>NAD(+)</name>
        <dbReference type="ChEBI" id="CHEBI:57540"/>
    </ligand>
</feature>
<feature type="binding site" evidence="1">
    <location>
        <begin position="122"/>
        <end position="125"/>
    </location>
    <ligand>
        <name>NAD(+)</name>
        <dbReference type="ChEBI" id="CHEBI:57540"/>
    </ligand>
</feature>
<feature type="binding site" evidence="1">
    <location>
        <position position="156"/>
    </location>
    <ligand>
        <name>(S)-2,3,4,5-tetrahydrodipicolinate</name>
        <dbReference type="ChEBI" id="CHEBI:16845"/>
    </ligand>
</feature>
<feature type="binding site" evidence="1">
    <location>
        <begin position="165"/>
        <end position="166"/>
    </location>
    <ligand>
        <name>(S)-2,3,4,5-tetrahydrodipicolinate</name>
        <dbReference type="ChEBI" id="CHEBI:16845"/>
    </ligand>
</feature>
<accession>Q87SF5</accession>
<gene>
    <name evidence="1" type="primary">dapB</name>
    <name type="ordered locus">VP0469</name>
</gene>
<keyword id="KW-0028">Amino-acid biosynthesis</keyword>
<keyword id="KW-0963">Cytoplasm</keyword>
<keyword id="KW-0220">Diaminopimelate biosynthesis</keyword>
<keyword id="KW-0457">Lysine biosynthesis</keyword>
<keyword id="KW-0520">NAD</keyword>
<keyword id="KW-0521">NADP</keyword>
<keyword id="KW-0560">Oxidoreductase</keyword>
<name>DAPB_VIBPA</name>
<proteinExistence type="inferred from homology"/>
<reference key="1">
    <citation type="journal article" date="2003" name="Lancet">
        <title>Genome sequence of Vibrio parahaemolyticus: a pathogenic mechanism distinct from that of V. cholerae.</title>
        <authorList>
            <person name="Makino K."/>
            <person name="Oshima K."/>
            <person name="Kurokawa K."/>
            <person name="Yokoyama K."/>
            <person name="Uda T."/>
            <person name="Tagomori K."/>
            <person name="Iijima Y."/>
            <person name="Najima M."/>
            <person name="Nakano M."/>
            <person name="Yamashita A."/>
            <person name="Kubota Y."/>
            <person name="Kimura S."/>
            <person name="Yasunaga T."/>
            <person name="Honda T."/>
            <person name="Shinagawa H."/>
            <person name="Hattori M."/>
            <person name="Iida T."/>
        </authorList>
    </citation>
    <scope>NUCLEOTIDE SEQUENCE [LARGE SCALE GENOMIC DNA]</scope>
    <source>
        <strain>RIMD 2210633</strain>
    </source>
</reference>
<evidence type="ECO:0000255" key="1">
    <source>
        <dbReference type="HAMAP-Rule" id="MF_00102"/>
    </source>
</evidence>
<evidence type="ECO:0000305" key="2"/>
<protein>
    <recommendedName>
        <fullName evidence="1">4-hydroxy-tetrahydrodipicolinate reductase</fullName>
        <shortName evidence="1">HTPA reductase</shortName>
        <ecNumber evidence="1">1.17.1.8</ecNumber>
    </recommendedName>
</protein>